<name>GNGF_MYCLE</name>
<reference key="1">
    <citation type="journal article" date="2001" name="Nature">
        <title>Massive gene decay in the leprosy bacillus.</title>
        <authorList>
            <person name="Cole S.T."/>
            <person name="Eiglmeier K."/>
            <person name="Parkhill J."/>
            <person name="James K.D."/>
            <person name="Thomson N.R."/>
            <person name="Wheeler P.R."/>
            <person name="Honore N."/>
            <person name="Garnier T."/>
            <person name="Churcher C.M."/>
            <person name="Harris D.E."/>
            <person name="Mungall K.L."/>
            <person name="Basham D."/>
            <person name="Brown D."/>
            <person name="Chillingworth T."/>
            <person name="Connor R."/>
            <person name="Davies R.M."/>
            <person name="Devlin K."/>
            <person name="Duthoy S."/>
            <person name="Feltwell T."/>
            <person name="Fraser A."/>
            <person name="Hamlin N."/>
            <person name="Holroyd S."/>
            <person name="Hornsby T."/>
            <person name="Jagels K."/>
            <person name="Lacroix C."/>
            <person name="Maclean J."/>
            <person name="Moule S."/>
            <person name="Murphy L.D."/>
            <person name="Oliver K."/>
            <person name="Quail M.A."/>
            <person name="Rajandream M.A."/>
            <person name="Rutherford K.M."/>
            <person name="Rutter S."/>
            <person name="Seeger K."/>
            <person name="Simon S."/>
            <person name="Simmonds M."/>
            <person name="Skelton J."/>
            <person name="Squares R."/>
            <person name="Squares S."/>
            <person name="Stevens K."/>
            <person name="Taylor K."/>
            <person name="Whitehead S."/>
            <person name="Woodward J.R."/>
            <person name="Barrell B.G."/>
        </authorList>
    </citation>
    <scope>NUCLEOTIDE SEQUENCE [LARGE SCALE GENOMIC DNA]</scope>
    <source>
        <strain>TN</strain>
    </source>
</reference>
<dbReference type="EMBL" id="AL583918">
    <property type="protein sequence ID" value="CAC30072.1"/>
    <property type="molecule type" value="Genomic_DNA"/>
</dbReference>
<dbReference type="PIR" id="D86979">
    <property type="entry name" value="D86979"/>
</dbReference>
<dbReference type="RefSeq" id="NP_301478.1">
    <property type="nucleotide sequence ID" value="NC_002677.1"/>
</dbReference>
<dbReference type="SMR" id="Q9CCN9"/>
<dbReference type="STRING" id="272631.gene:17574385"/>
<dbReference type="KEGG" id="mle:ML0564"/>
<dbReference type="PATRIC" id="fig|272631.5.peg.975"/>
<dbReference type="Leproma" id="ML0564"/>
<dbReference type="eggNOG" id="COG0391">
    <property type="taxonomic scope" value="Bacteria"/>
</dbReference>
<dbReference type="HOGENOM" id="CLU_044041_1_0_11"/>
<dbReference type="OrthoDB" id="9783842at2"/>
<dbReference type="Proteomes" id="UP000000806">
    <property type="component" value="Chromosome"/>
</dbReference>
<dbReference type="GO" id="GO:0005737">
    <property type="term" value="C:cytoplasm"/>
    <property type="evidence" value="ECO:0007669"/>
    <property type="project" value="UniProtKB-SubCell"/>
</dbReference>
<dbReference type="GO" id="GO:0043743">
    <property type="term" value="F:LPPG:FO 2-phospho-L-lactate transferase activity"/>
    <property type="evidence" value="ECO:0007669"/>
    <property type="project" value="InterPro"/>
</dbReference>
<dbReference type="GO" id="GO:0008360">
    <property type="term" value="P:regulation of cell shape"/>
    <property type="evidence" value="ECO:0007669"/>
    <property type="project" value="UniProtKB-UniRule"/>
</dbReference>
<dbReference type="CDD" id="cd07187">
    <property type="entry name" value="YvcK_like"/>
    <property type="match status" value="1"/>
</dbReference>
<dbReference type="Gene3D" id="3.40.50.10680">
    <property type="entry name" value="CofD-like domains"/>
    <property type="match status" value="1"/>
</dbReference>
<dbReference type="HAMAP" id="MF_00973">
    <property type="entry name" value="Gluconeogen_factor"/>
    <property type="match status" value="1"/>
</dbReference>
<dbReference type="InterPro" id="IPR002882">
    <property type="entry name" value="CofD"/>
</dbReference>
<dbReference type="InterPro" id="IPR038136">
    <property type="entry name" value="CofD-like_dom_sf"/>
</dbReference>
<dbReference type="InterPro" id="IPR010119">
    <property type="entry name" value="Gluconeogen_factor"/>
</dbReference>
<dbReference type="NCBIfam" id="TIGR01826">
    <property type="entry name" value="CofD_related"/>
    <property type="match status" value="1"/>
</dbReference>
<dbReference type="PANTHER" id="PTHR30135:SF3">
    <property type="entry name" value="GLUCONEOGENESIS FACTOR-RELATED"/>
    <property type="match status" value="1"/>
</dbReference>
<dbReference type="PANTHER" id="PTHR30135">
    <property type="entry name" value="UNCHARACTERIZED PROTEIN YVCK-RELATED"/>
    <property type="match status" value="1"/>
</dbReference>
<dbReference type="Pfam" id="PF01933">
    <property type="entry name" value="CofD"/>
    <property type="match status" value="1"/>
</dbReference>
<dbReference type="SUPFAM" id="SSF142338">
    <property type="entry name" value="CofD-like"/>
    <property type="match status" value="1"/>
</dbReference>
<proteinExistence type="inferred from homology"/>
<accession>Q9CCN9</accession>
<comment type="function">
    <text evidence="1">Required for morphogenesis under gluconeogenic growth conditions.</text>
</comment>
<comment type="subcellular location">
    <subcellularLocation>
        <location evidence="1">Cytoplasm</location>
    </subcellularLocation>
</comment>
<comment type="similarity">
    <text evidence="1">Belongs to the gluconeogenesis factor family.</text>
</comment>
<keyword id="KW-0963">Cytoplasm</keyword>
<keyword id="KW-1185">Reference proteome</keyword>
<feature type="chain" id="PRO_0000107810" description="Putative gluconeogenesis factor">
    <location>
        <begin position="1"/>
        <end position="359"/>
    </location>
</feature>
<feature type="region of interest" description="Disordered" evidence="2">
    <location>
        <begin position="317"/>
        <end position="359"/>
    </location>
</feature>
<sequence>MISPGSPPSIVALGGGHGLYVTLSAARRLTPYVTAIVTVADDGGSSGRLRSELGVVPPGDLRMALAALASDSPYGRLWATILQHRFGGSGALAGHPIGNLMLAGLSEVLADPVAALDEVGRILGVKGRVLPMCPIALQIEADVSGLEADPRIFRLIRGQVAIASTPGKVRRVRLLPVDPPATRQAVDAIMAANLVVLGPGSWFTSVIPHVLVPGLVTALRATTARRALVLNLAAGPGETAGFSVERHLHVLAQHAPGFTVHDIIIDADRVPNNREREQLRRAATLLQAEVHFVDVARPGTSLHDPGKLATALDGVRVGNQDSSAPTVAATEQIRLDGKRPQTGVNGPVGKGPRGDDAWR</sequence>
<evidence type="ECO:0000255" key="1">
    <source>
        <dbReference type="HAMAP-Rule" id="MF_00973"/>
    </source>
</evidence>
<evidence type="ECO:0000256" key="2">
    <source>
        <dbReference type="SAM" id="MobiDB-lite"/>
    </source>
</evidence>
<protein>
    <recommendedName>
        <fullName evidence="1">Putative gluconeogenesis factor</fullName>
    </recommendedName>
</protein>
<organism>
    <name type="scientific">Mycobacterium leprae (strain TN)</name>
    <dbReference type="NCBI Taxonomy" id="272631"/>
    <lineage>
        <taxon>Bacteria</taxon>
        <taxon>Bacillati</taxon>
        <taxon>Actinomycetota</taxon>
        <taxon>Actinomycetes</taxon>
        <taxon>Mycobacteriales</taxon>
        <taxon>Mycobacteriaceae</taxon>
        <taxon>Mycobacterium</taxon>
    </lineage>
</organism>
<gene>
    <name type="ordered locus">ML0564</name>
</gene>